<evidence type="ECO:0000255" key="1">
    <source>
        <dbReference type="HAMAP-Rule" id="MF_01039"/>
    </source>
</evidence>
<keyword id="KW-0312">Gluconeogenesis</keyword>
<keyword id="KW-0324">Glycolysis</keyword>
<keyword id="KW-0413">Isomerase</keyword>
<keyword id="KW-1185">Reference proteome</keyword>
<accession>B6JCI9</accession>
<accession>F8BRD6</accession>
<name>GPMA_AFIC5</name>
<reference key="1">
    <citation type="journal article" date="2008" name="J. Bacteriol.">
        <title>Genome sequence of the chemolithoautotrophic bacterium Oligotropha carboxidovorans OM5T.</title>
        <authorList>
            <person name="Paul D."/>
            <person name="Bridges S."/>
            <person name="Burgess S.C."/>
            <person name="Dandass Y."/>
            <person name="Lawrence M.L."/>
        </authorList>
    </citation>
    <scope>NUCLEOTIDE SEQUENCE [LARGE SCALE GENOMIC DNA]</scope>
    <source>
        <strain>ATCC 49405 / DSM 1227 / KCTC 32145 / OM5</strain>
    </source>
</reference>
<reference key="2">
    <citation type="journal article" date="2011" name="J. Bacteriol.">
        <title>Complete genome sequences of the chemolithoautotrophic Oligotropha carboxidovorans strains OM4 and OM5.</title>
        <authorList>
            <person name="Volland S."/>
            <person name="Rachinger M."/>
            <person name="Strittmatter A."/>
            <person name="Daniel R."/>
            <person name="Gottschalk G."/>
            <person name="Meyer O."/>
        </authorList>
    </citation>
    <scope>NUCLEOTIDE SEQUENCE [LARGE SCALE GENOMIC DNA]</scope>
    <source>
        <strain>ATCC 49405 / DSM 1227 / KCTC 32145 / OM5</strain>
    </source>
</reference>
<proteinExistence type="inferred from homology"/>
<feature type="chain" id="PRO_1000135961" description="2,3-bisphosphoglycerate-dependent phosphoglycerate mutase">
    <location>
        <begin position="1"/>
        <end position="207"/>
    </location>
</feature>
<feature type="active site" description="Tele-phosphohistidine intermediate" evidence="1">
    <location>
        <position position="11"/>
    </location>
</feature>
<feature type="active site" description="Proton donor/acceptor" evidence="1">
    <location>
        <position position="89"/>
    </location>
</feature>
<feature type="binding site" evidence="1">
    <location>
        <begin position="10"/>
        <end position="17"/>
    </location>
    <ligand>
        <name>substrate</name>
    </ligand>
</feature>
<feature type="binding site" evidence="1">
    <location>
        <begin position="23"/>
        <end position="24"/>
    </location>
    <ligand>
        <name>substrate</name>
    </ligand>
</feature>
<feature type="binding site" evidence="1">
    <location>
        <position position="62"/>
    </location>
    <ligand>
        <name>substrate</name>
    </ligand>
</feature>
<feature type="binding site" evidence="1">
    <location>
        <begin position="89"/>
        <end position="92"/>
    </location>
    <ligand>
        <name>substrate</name>
    </ligand>
</feature>
<feature type="binding site" evidence="1">
    <location>
        <position position="100"/>
    </location>
    <ligand>
        <name>substrate</name>
    </ligand>
</feature>
<feature type="binding site" evidence="1">
    <location>
        <begin position="116"/>
        <end position="117"/>
    </location>
    <ligand>
        <name>substrate</name>
    </ligand>
</feature>
<feature type="binding site" evidence="1">
    <location>
        <begin position="160"/>
        <end position="161"/>
    </location>
    <ligand>
        <name>substrate</name>
    </ligand>
</feature>
<feature type="site" description="Transition state stabilizer" evidence="1">
    <location>
        <position position="159"/>
    </location>
</feature>
<organism>
    <name type="scientific">Afipia carboxidovorans (strain ATCC 49405 / DSM 1227 / KCTC 32145 / OM5)</name>
    <name type="common">Oligotropha carboxidovorans</name>
    <dbReference type="NCBI Taxonomy" id="504832"/>
    <lineage>
        <taxon>Bacteria</taxon>
        <taxon>Pseudomonadati</taxon>
        <taxon>Pseudomonadota</taxon>
        <taxon>Alphaproteobacteria</taxon>
        <taxon>Hyphomicrobiales</taxon>
        <taxon>Nitrobacteraceae</taxon>
        <taxon>Afipia</taxon>
    </lineage>
</organism>
<gene>
    <name evidence="1" type="primary">gpmA</name>
    <name type="ordered locus">OCAR_4423</name>
    <name type="ordered locus">OCA5_c01080</name>
</gene>
<dbReference type="EC" id="5.4.2.11" evidence="1"/>
<dbReference type="EMBL" id="CP001196">
    <property type="protein sequence ID" value="ACI91569.1"/>
    <property type="molecule type" value="Genomic_DNA"/>
</dbReference>
<dbReference type="EMBL" id="CP002826">
    <property type="protein sequence ID" value="AEI04840.1"/>
    <property type="molecule type" value="Genomic_DNA"/>
</dbReference>
<dbReference type="RefSeq" id="WP_012561600.1">
    <property type="nucleotide sequence ID" value="NC_015684.1"/>
</dbReference>
<dbReference type="SMR" id="B6JCI9"/>
<dbReference type="STRING" id="504832.OCA5_c01080"/>
<dbReference type="KEGG" id="oca:OCAR_4423"/>
<dbReference type="KEGG" id="ocg:OCA5_c01080"/>
<dbReference type="PATRIC" id="fig|504832.7.peg.114"/>
<dbReference type="eggNOG" id="COG0588">
    <property type="taxonomic scope" value="Bacteria"/>
</dbReference>
<dbReference type="HOGENOM" id="CLU_033323_1_4_5"/>
<dbReference type="OrthoDB" id="9781415at2"/>
<dbReference type="UniPathway" id="UPA00109">
    <property type="reaction ID" value="UER00186"/>
</dbReference>
<dbReference type="Proteomes" id="UP000007730">
    <property type="component" value="Chromosome"/>
</dbReference>
<dbReference type="GO" id="GO:0004619">
    <property type="term" value="F:phosphoglycerate mutase activity"/>
    <property type="evidence" value="ECO:0007669"/>
    <property type="project" value="UniProtKB-EC"/>
</dbReference>
<dbReference type="GO" id="GO:0006094">
    <property type="term" value="P:gluconeogenesis"/>
    <property type="evidence" value="ECO:0007669"/>
    <property type="project" value="UniProtKB-UniRule"/>
</dbReference>
<dbReference type="GO" id="GO:0006096">
    <property type="term" value="P:glycolytic process"/>
    <property type="evidence" value="ECO:0007669"/>
    <property type="project" value="UniProtKB-UniRule"/>
</dbReference>
<dbReference type="CDD" id="cd07067">
    <property type="entry name" value="HP_PGM_like"/>
    <property type="match status" value="1"/>
</dbReference>
<dbReference type="Gene3D" id="3.40.50.1240">
    <property type="entry name" value="Phosphoglycerate mutase-like"/>
    <property type="match status" value="1"/>
</dbReference>
<dbReference type="HAMAP" id="MF_01039">
    <property type="entry name" value="PGAM_GpmA"/>
    <property type="match status" value="1"/>
</dbReference>
<dbReference type="InterPro" id="IPR013078">
    <property type="entry name" value="His_Pase_superF_clade-1"/>
</dbReference>
<dbReference type="InterPro" id="IPR029033">
    <property type="entry name" value="His_PPase_superfam"/>
</dbReference>
<dbReference type="InterPro" id="IPR001345">
    <property type="entry name" value="PG/BPGM_mutase_AS"/>
</dbReference>
<dbReference type="InterPro" id="IPR005952">
    <property type="entry name" value="Phosphogly_mut1"/>
</dbReference>
<dbReference type="NCBIfam" id="TIGR01258">
    <property type="entry name" value="pgm_1"/>
    <property type="match status" value="1"/>
</dbReference>
<dbReference type="NCBIfam" id="NF002339">
    <property type="entry name" value="PRK01295.1"/>
    <property type="match status" value="1"/>
</dbReference>
<dbReference type="PANTHER" id="PTHR11931">
    <property type="entry name" value="PHOSPHOGLYCERATE MUTASE"/>
    <property type="match status" value="1"/>
</dbReference>
<dbReference type="Pfam" id="PF00300">
    <property type="entry name" value="His_Phos_1"/>
    <property type="match status" value="1"/>
</dbReference>
<dbReference type="SMART" id="SM00855">
    <property type="entry name" value="PGAM"/>
    <property type="match status" value="1"/>
</dbReference>
<dbReference type="SUPFAM" id="SSF53254">
    <property type="entry name" value="Phosphoglycerate mutase-like"/>
    <property type="match status" value="1"/>
</dbReference>
<dbReference type="PROSITE" id="PS00175">
    <property type="entry name" value="PG_MUTASE"/>
    <property type="match status" value="1"/>
</dbReference>
<protein>
    <recommendedName>
        <fullName evidence="1">2,3-bisphosphoglycerate-dependent phosphoglycerate mutase</fullName>
        <shortName evidence="1">BPG-dependent PGAM</shortName>
        <shortName evidence="1">PGAM</shortName>
        <shortName evidence="1">Phosphoglyceromutase</shortName>
        <shortName evidence="1">dPGM</shortName>
        <ecNumber evidence="1">5.4.2.11</ecNumber>
    </recommendedName>
</protein>
<sequence>MSDRLLVLVRHGQSEWNLKNLFTGWKDPDITAQGVDEAKRAGKLLKAEGFVFDAAFVSELTRAKHTLSLILEELGQTSLPVKSDIALNERDYGDLSGLNKDDARKKWGEEQVHIWRRSYDVAPPGGESLKDTLARTLPYYVQEILPGVLRGERTIVTAHGNSLRALIMVLERLSPEAILKRELATGVPIIYRLRADATVESKTDLAG</sequence>
<comment type="function">
    <text evidence="1">Catalyzes the interconversion of 2-phosphoglycerate and 3-phosphoglycerate.</text>
</comment>
<comment type="catalytic activity">
    <reaction evidence="1">
        <text>(2R)-2-phosphoglycerate = (2R)-3-phosphoglycerate</text>
        <dbReference type="Rhea" id="RHEA:15901"/>
        <dbReference type="ChEBI" id="CHEBI:58272"/>
        <dbReference type="ChEBI" id="CHEBI:58289"/>
        <dbReference type="EC" id="5.4.2.11"/>
    </reaction>
</comment>
<comment type="pathway">
    <text evidence="1">Carbohydrate degradation; glycolysis; pyruvate from D-glyceraldehyde 3-phosphate: step 3/5.</text>
</comment>
<comment type="subunit">
    <text evidence="1">Homodimer.</text>
</comment>
<comment type="similarity">
    <text evidence="1">Belongs to the phosphoglycerate mutase family. BPG-dependent PGAM subfamily.</text>
</comment>